<name>RL19_RICRS</name>
<protein>
    <recommendedName>
        <fullName evidence="1">Large ribosomal subunit protein bL19</fullName>
    </recommendedName>
    <alternativeName>
        <fullName evidence="2">50S ribosomal protein L19</fullName>
    </alternativeName>
</protein>
<evidence type="ECO:0000255" key="1">
    <source>
        <dbReference type="HAMAP-Rule" id="MF_00402"/>
    </source>
</evidence>
<evidence type="ECO:0000305" key="2"/>
<dbReference type="EMBL" id="CP000848">
    <property type="protein sequence ID" value="ABV75758.1"/>
    <property type="molecule type" value="Genomic_DNA"/>
</dbReference>
<dbReference type="RefSeq" id="WP_012150370.1">
    <property type="nucleotide sequence ID" value="NZ_CP121767.1"/>
</dbReference>
<dbReference type="SMR" id="A8GQT3"/>
<dbReference type="GeneID" id="79936945"/>
<dbReference type="KEGG" id="rri:A1G_00880"/>
<dbReference type="HOGENOM" id="CLU_103507_1_0_5"/>
<dbReference type="Proteomes" id="UP000006832">
    <property type="component" value="Chromosome"/>
</dbReference>
<dbReference type="GO" id="GO:0022625">
    <property type="term" value="C:cytosolic large ribosomal subunit"/>
    <property type="evidence" value="ECO:0007669"/>
    <property type="project" value="TreeGrafter"/>
</dbReference>
<dbReference type="GO" id="GO:0003735">
    <property type="term" value="F:structural constituent of ribosome"/>
    <property type="evidence" value="ECO:0007669"/>
    <property type="project" value="InterPro"/>
</dbReference>
<dbReference type="GO" id="GO:0006412">
    <property type="term" value="P:translation"/>
    <property type="evidence" value="ECO:0007669"/>
    <property type="project" value="UniProtKB-UniRule"/>
</dbReference>
<dbReference type="Gene3D" id="2.30.30.790">
    <property type="match status" value="1"/>
</dbReference>
<dbReference type="HAMAP" id="MF_00402">
    <property type="entry name" value="Ribosomal_bL19"/>
    <property type="match status" value="1"/>
</dbReference>
<dbReference type="InterPro" id="IPR001857">
    <property type="entry name" value="Ribosomal_bL19"/>
</dbReference>
<dbReference type="InterPro" id="IPR018257">
    <property type="entry name" value="Ribosomal_bL19_CS"/>
</dbReference>
<dbReference type="InterPro" id="IPR038657">
    <property type="entry name" value="Ribosomal_bL19_sf"/>
</dbReference>
<dbReference type="InterPro" id="IPR008991">
    <property type="entry name" value="Translation_prot_SH3-like_sf"/>
</dbReference>
<dbReference type="NCBIfam" id="TIGR01024">
    <property type="entry name" value="rplS_bact"/>
    <property type="match status" value="1"/>
</dbReference>
<dbReference type="PANTHER" id="PTHR15680:SF9">
    <property type="entry name" value="LARGE RIBOSOMAL SUBUNIT PROTEIN BL19M"/>
    <property type="match status" value="1"/>
</dbReference>
<dbReference type="PANTHER" id="PTHR15680">
    <property type="entry name" value="RIBOSOMAL PROTEIN L19"/>
    <property type="match status" value="1"/>
</dbReference>
<dbReference type="Pfam" id="PF01245">
    <property type="entry name" value="Ribosomal_L19"/>
    <property type="match status" value="1"/>
</dbReference>
<dbReference type="PIRSF" id="PIRSF002191">
    <property type="entry name" value="Ribosomal_L19"/>
    <property type="match status" value="1"/>
</dbReference>
<dbReference type="PRINTS" id="PR00061">
    <property type="entry name" value="RIBOSOMALL19"/>
</dbReference>
<dbReference type="SUPFAM" id="SSF50104">
    <property type="entry name" value="Translation proteins SH3-like domain"/>
    <property type="match status" value="1"/>
</dbReference>
<dbReference type="PROSITE" id="PS01015">
    <property type="entry name" value="RIBOSOMAL_L19"/>
    <property type="match status" value="1"/>
</dbReference>
<gene>
    <name evidence="1" type="primary">rplS</name>
    <name type="ordered locus">A1G_00880</name>
</gene>
<organism>
    <name type="scientific">Rickettsia rickettsii (strain Sheila Smith)</name>
    <dbReference type="NCBI Taxonomy" id="392021"/>
    <lineage>
        <taxon>Bacteria</taxon>
        <taxon>Pseudomonadati</taxon>
        <taxon>Pseudomonadota</taxon>
        <taxon>Alphaproteobacteria</taxon>
        <taxon>Rickettsiales</taxon>
        <taxon>Rickettsiaceae</taxon>
        <taxon>Rickettsieae</taxon>
        <taxon>Rickettsia</taxon>
        <taxon>spotted fever group</taxon>
    </lineage>
</organism>
<accession>A8GQT3</accession>
<comment type="function">
    <text evidence="1">This protein is located at the 30S-50S ribosomal subunit interface and may play a role in the structure and function of the aminoacyl-tRNA binding site.</text>
</comment>
<comment type="similarity">
    <text evidence="1">Belongs to the bacterial ribosomal protein bL19 family.</text>
</comment>
<proteinExistence type="inferred from homology"/>
<reference key="1">
    <citation type="submission" date="2007-09" db="EMBL/GenBank/DDBJ databases">
        <title>Complete genome sequence of Rickettsia rickettsii.</title>
        <authorList>
            <person name="Madan A."/>
            <person name="Fahey J."/>
            <person name="Helton E."/>
            <person name="Ketteman M."/>
            <person name="Madan A."/>
            <person name="Rodrigues S."/>
            <person name="Sanchez A."/>
            <person name="Dasch G."/>
            <person name="Eremeeva M."/>
        </authorList>
    </citation>
    <scope>NUCLEOTIDE SEQUENCE [LARGE SCALE GENOMIC DNA]</scope>
    <source>
        <strain>Sheila Smith</strain>
    </source>
</reference>
<keyword id="KW-0687">Ribonucleoprotein</keyword>
<keyword id="KW-0689">Ribosomal protein</keyword>
<feature type="chain" id="PRO_1000049734" description="Large ribosomal subunit protein bL19">
    <location>
        <begin position="1"/>
        <end position="138"/>
    </location>
</feature>
<sequence length="138" mass="15849">MNIIDRFEQENISKRTANKKIPDFEAGDTVKVTVKIVDRSIEKDGKEKLTERFQAYEGVVIAKRNRGITSSFLVRKISHGEGVERRFMTYSPIVHSIDVVKYGVVRRAKLYYLRNRSGKSARIKERHIPIAKTKAAKA</sequence>